<organism>
    <name type="scientific">Listeria monocytogenes serotype 4a (strain HCC23)</name>
    <dbReference type="NCBI Taxonomy" id="552536"/>
    <lineage>
        <taxon>Bacteria</taxon>
        <taxon>Bacillati</taxon>
        <taxon>Bacillota</taxon>
        <taxon>Bacilli</taxon>
        <taxon>Bacillales</taxon>
        <taxon>Listeriaceae</taxon>
        <taxon>Listeria</taxon>
    </lineage>
</organism>
<proteinExistence type="inferred from homology"/>
<accession>B8DAY4</accession>
<gene>
    <name evidence="2" type="primary">rpsL</name>
    <name type="ordered locus">LMHCC_2878</name>
</gene>
<evidence type="ECO:0000250" key="1"/>
<evidence type="ECO:0000255" key="2">
    <source>
        <dbReference type="HAMAP-Rule" id="MF_00403"/>
    </source>
</evidence>
<evidence type="ECO:0000256" key="3">
    <source>
        <dbReference type="SAM" id="MobiDB-lite"/>
    </source>
</evidence>
<evidence type="ECO:0000305" key="4"/>
<reference key="1">
    <citation type="journal article" date="2011" name="J. Bacteriol.">
        <title>Genome sequence of lineage III Listeria monocytogenes strain HCC23.</title>
        <authorList>
            <person name="Steele C.L."/>
            <person name="Donaldson J.R."/>
            <person name="Paul D."/>
            <person name="Banes M.M."/>
            <person name="Arick T."/>
            <person name="Bridges S.M."/>
            <person name="Lawrence M.L."/>
        </authorList>
    </citation>
    <scope>NUCLEOTIDE SEQUENCE [LARGE SCALE GENOMIC DNA]</scope>
    <source>
        <strain>HCC23</strain>
    </source>
</reference>
<sequence>MPTINQLVRKPRQSKIKKSTSPALNKGLNSFKRELTDVNSPQKRGVCTRVGTMTPKKPNSALRKYARVRLSNGIEVTAYIPGIGHNLQEHSVVLIRGGRVKDLPGVRYHIVRGALDTAGVENRGQSRSKYGTKKPKK</sequence>
<protein>
    <recommendedName>
        <fullName evidence="2">Small ribosomal subunit protein uS12</fullName>
    </recommendedName>
    <alternativeName>
        <fullName evidence="4">30S ribosomal protein S12</fullName>
    </alternativeName>
</protein>
<feature type="chain" id="PRO_1000134640" description="Small ribosomal subunit protein uS12">
    <location>
        <begin position="1"/>
        <end position="137"/>
    </location>
</feature>
<feature type="region of interest" description="Disordered" evidence="3">
    <location>
        <begin position="1"/>
        <end position="26"/>
    </location>
</feature>
<feature type="compositionally biased region" description="Basic residues" evidence="3">
    <location>
        <begin position="9"/>
        <end position="18"/>
    </location>
</feature>
<feature type="modified residue" description="3-methylthioaspartic acid" evidence="1">
    <location>
        <position position="102"/>
    </location>
</feature>
<comment type="function">
    <text evidence="2">With S4 and S5 plays an important role in translational accuracy.</text>
</comment>
<comment type="function">
    <text evidence="2">Interacts with and stabilizes bases of the 16S rRNA that are involved in tRNA selection in the A site and with the mRNA backbone. Located at the interface of the 30S and 50S subunits, it traverses the body of the 30S subunit contacting proteins on the other side and probably holding the rRNA structure together. The combined cluster of proteins S8, S12 and S17 appears to hold together the shoulder and platform of the 30S subunit.</text>
</comment>
<comment type="subunit">
    <text evidence="2">Part of the 30S ribosomal subunit. Contacts proteins S8 and S17. May interact with IF1 in the 30S initiation complex.</text>
</comment>
<comment type="similarity">
    <text evidence="2">Belongs to the universal ribosomal protein uS12 family.</text>
</comment>
<name>RS12_LISMH</name>
<keyword id="KW-0488">Methylation</keyword>
<keyword id="KW-0687">Ribonucleoprotein</keyword>
<keyword id="KW-0689">Ribosomal protein</keyword>
<keyword id="KW-0694">RNA-binding</keyword>
<keyword id="KW-0699">rRNA-binding</keyword>
<keyword id="KW-0820">tRNA-binding</keyword>
<dbReference type="EMBL" id="CP001175">
    <property type="protein sequence ID" value="ACK41209.1"/>
    <property type="molecule type" value="Genomic_DNA"/>
</dbReference>
<dbReference type="RefSeq" id="WP_003720973.1">
    <property type="nucleotide sequence ID" value="NC_011660.1"/>
</dbReference>
<dbReference type="SMR" id="B8DAY4"/>
<dbReference type="GeneID" id="93240543"/>
<dbReference type="KEGG" id="lmh:LMHCC_2878"/>
<dbReference type="HOGENOM" id="CLU_104295_1_2_9"/>
<dbReference type="GO" id="GO:0015935">
    <property type="term" value="C:small ribosomal subunit"/>
    <property type="evidence" value="ECO:0007669"/>
    <property type="project" value="InterPro"/>
</dbReference>
<dbReference type="GO" id="GO:0019843">
    <property type="term" value="F:rRNA binding"/>
    <property type="evidence" value="ECO:0007669"/>
    <property type="project" value="UniProtKB-UniRule"/>
</dbReference>
<dbReference type="GO" id="GO:0003735">
    <property type="term" value="F:structural constituent of ribosome"/>
    <property type="evidence" value="ECO:0007669"/>
    <property type="project" value="InterPro"/>
</dbReference>
<dbReference type="GO" id="GO:0000049">
    <property type="term" value="F:tRNA binding"/>
    <property type="evidence" value="ECO:0007669"/>
    <property type="project" value="UniProtKB-UniRule"/>
</dbReference>
<dbReference type="GO" id="GO:0006412">
    <property type="term" value="P:translation"/>
    <property type="evidence" value="ECO:0007669"/>
    <property type="project" value="UniProtKB-UniRule"/>
</dbReference>
<dbReference type="CDD" id="cd03368">
    <property type="entry name" value="Ribosomal_S12"/>
    <property type="match status" value="1"/>
</dbReference>
<dbReference type="FunFam" id="2.40.50.140:FF:000001">
    <property type="entry name" value="30S ribosomal protein S12"/>
    <property type="match status" value="1"/>
</dbReference>
<dbReference type="Gene3D" id="2.40.50.140">
    <property type="entry name" value="Nucleic acid-binding proteins"/>
    <property type="match status" value="1"/>
</dbReference>
<dbReference type="HAMAP" id="MF_00403_B">
    <property type="entry name" value="Ribosomal_uS12_B"/>
    <property type="match status" value="1"/>
</dbReference>
<dbReference type="InterPro" id="IPR012340">
    <property type="entry name" value="NA-bd_OB-fold"/>
</dbReference>
<dbReference type="InterPro" id="IPR006032">
    <property type="entry name" value="Ribosomal_uS12"/>
</dbReference>
<dbReference type="InterPro" id="IPR005679">
    <property type="entry name" value="Ribosomal_uS12_bac"/>
</dbReference>
<dbReference type="NCBIfam" id="TIGR00981">
    <property type="entry name" value="rpsL_bact"/>
    <property type="match status" value="1"/>
</dbReference>
<dbReference type="PANTHER" id="PTHR11652">
    <property type="entry name" value="30S RIBOSOMAL PROTEIN S12 FAMILY MEMBER"/>
    <property type="match status" value="1"/>
</dbReference>
<dbReference type="Pfam" id="PF00164">
    <property type="entry name" value="Ribosom_S12_S23"/>
    <property type="match status" value="1"/>
</dbReference>
<dbReference type="PIRSF" id="PIRSF002133">
    <property type="entry name" value="Ribosomal_S12/S23"/>
    <property type="match status" value="1"/>
</dbReference>
<dbReference type="PRINTS" id="PR01034">
    <property type="entry name" value="RIBOSOMALS12"/>
</dbReference>
<dbReference type="SUPFAM" id="SSF50249">
    <property type="entry name" value="Nucleic acid-binding proteins"/>
    <property type="match status" value="1"/>
</dbReference>
<dbReference type="PROSITE" id="PS00055">
    <property type="entry name" value="RIBOSOMAL_S12"/>
    <property type="match status" value="1"/>
</dbReference>